<protein>
    <recommendedName>
        <fullName evidence="1">D-alanyl carrier protein</fullName>
        <shortName evidence="1">DCP</shortName>
    </recommendedName>
    <alternativeName>
        <fullName evidence="1">D-alanine--poly(phosphoribitol) ligase subunit 2</fullName>
    </alternativeName>
</protein>
<accession>B2INJ3</accession>
<sequence>MDIKSEVIEIIDELFMEDVSDMMDEDLFDAGVLDSMGTVELIVEIENRFDIRVPVTEFGRDDWNTANKIIAGIVELQNA</sequence>
<name>DLTC_STRPS</name>
<dbReference type="EMBL" id="CP001033">
    <property type="protein sequence ID" value="ACB91394.1"/>
    <property type="molecule type" value="Genomic_DNA"/>
</dbReference>
<dbReference type="RefSeq" id="WP_000351967.1">
    <property type="nucleotide sequence ID" value="NC_010582.1"/>
</dbReference>
<dbReference type="SMR" id="B2INJ3"/>
<dbReference type="GeneID" id="93738863"/>
<dbReference type="KEGG" id="spw:SPCG_2142"/>
<dbReference type="HOGENOM" id="CLU_108696_19_0_9"/>
<dbReference type="UniPathway" id="UPA00556"/>
<dbReference type="GO" id="GO:0005737">
    <property type="term" value="C:cytoplasm"/>
    <property type="evidence" value="ECO:0007669"/>
    <property type="project" value="UniProtKB-SubCell"/>
</dbReference>
<dbReference type="GO" id="GO:0036370">
    <property type="term" value="F:D-alanyl carrier activity"/>
    <property type="evidence" value="ECO:0007669"/>
    <property type="project" value="UniProtKB-UniRule"/>
</dbReference>
<dbReference type="GO" id="GO:0071555">
    <property type="term" value="P:cell wall organization"/>
    <property type="evidence" value="ECO:0007669"/>
    <property type="project" value="UniProtKB-KW"/>
</dbReference>
<dbReference type="GO" id="GO:0070395">
    <property type="term" value="P:lipoteichoic acid biosynthetic process"/>
    <property type="evidence" value="ECO:0007669"/>
    <property type="project" value="UniProtKB-UniRule"/>
</dbReference>
<dbReference type="Gene3D" id="1.10.1200.10">
    <property type="entry name" value="ACP-like"/>
    <property type="match status" value="1"/>
</dbReference>
<dbReference type="HAMAP" id="MF_00565">
    <property type="entry name" value="DltC"/>
    <property type="match status" value="1"/>
</dbReference>
<dbReference type="InterPro" id="IPR036736">
    <property type="entry name" value="ACP-like_sf"/>
</dbReference>
<dbReference type="InterPro" id="IPR003230">
    <property type="entry name" value="DltC"/>
</dbReference>
<dbReference type="InterPro" id="IPR009081">
    <property type="entry name" value="PP-bd_ACP"/>
</dbReference>
<dbReference type="NCBIfam" id="TIGR01688">
    <property type="entry name" value="dltC"/>
    <property type="match status" value="1"/>
</dbReference>
<dbReference type="NCBIfam" id="NF003464">
    <property type="entry name" value="PRK05087.1"/>
    <property type="match status" value="1"/>
</dbReference>
<dbReference type="Pfam" id="PF00550">
    <property type="entry name" value="PP-binding"/>
    <property type="match status" value="1"/>
</dbReference>
<dbReference type="SUPFAM" id="SSF47336">
    <property type="entry name" value="ACP-like"/>
    <property type="match status" value="1"/>
</dbReference>
<dbReference type="PROSITE" id="PS50075">
    <property type="entry name" value="CARRIER"/>
    <property type="match status" value="1"/>
</dbReference>
<reference key="1">
    <citation type="journal article" date="2009" name="BMC Genomics">
        <title>Genome evolution driven by host adaptations results in a more virulent and antimicrobial-resistant Streptococcus pneumoniae serotype 14.</title>
        <authorList>
            <person name="Ding F."/>
            <person name="Tang P."/>
            <person name="Hsu M.-H."/>
            <person name="Cui P."/>
            <person name="Hu S."/>
            <person name="Yu J."/>
            <person name="Chiu C.-H."/>
        </authorList>
    </citation>
    <scope>NUCLEOTIDE SEQUENCE [LARGE SCALE GENOMIC DNA]</scope>
    <source>
        <strain>CGSP14</strain>
    </source>
</reference>
<evidence type="ECO:0000255" key="1">
    <source>
        <dbReference type="HAMAP-Rule" id="MF_00565"/>
    </source>
</evidence>
<feature type="chain" id="PRO_1000129404" description="D-alanyl carrier protein">
    <location>
        <begin position="1"/>
        <end position="79"/>
    </location>
</feature>
<feature type="domain" description="Carrier" evidence="1">
    <location>
        <begin position="1"/>
        <end position="77"/>
    </location>
</feature>
<feature type="modified residue" description="O-(pantetheine 4'-phosphoryl)serine" evidence="1">
    <location>
        <position position="35"/>
    </location>
</feature>
<keyword id="KW-0961">Cell wall biogenesis/degradation</keyword>
<keyword id="KW-0963">Cytoplasm</keyword>
<keyword id="KW-0596">Phosphopantetheine</keyword>
<keyword id="KW-0597">Phosphoprotein</keyword>
<comment type="function">
    <text evidence="1">Carrier protein involved in the D-alanylation of lipoteichoic acid (LTA). The loading of thioester-linked D-alanine onto DltC is catalyzed by D-alanine--D-alanyl carrier protein ligase DltA. The DltC-carried D-alanyl group is further transferred to cell membrane phosphatidylglycerol (PG) by forming an ester bond, probably catalyzed by DltD. D-alanylation of LTA plays an important role in modulating the properties of the cell wall in Gram-positive bacteria, influencing the net charge of the cell wall.</text>
</comment>
<comment type="pathway">
    <text evidence="1">Cell wall biogenesis; lipoteichoic acid biosynthesis.</text>
</comment>
<comment type="subcellular location">
    <subcellularLocation>
        <location evidence="1">Cytoplasm</location>
    </subcellularLocation>
</comment>
<comment type="PTM">
    <text evidence="1">4'-phosphopantetheine is transferred from CoA to a specific serine of apo-DCP.</text>
</comment>
<comment type="similarity">
    <text evidence="1">Belongs to the DltC family.</text>
</comment>
<gene>
    <name evidence="1" type="primary">dltC</name>
    <name type="ordered locus">SPCG_2142</name>
</gene>
<organism>
    <name type="scientific">Streptococcus pneumoniae (strain CGSP14)</name>
    <dbReference type="NCBI Taxonomy" id="516950"/>
    <lineage>
        <taxon>Bacteria</taxon>
        <taxon>Bacillati</taxon>
        <taxon>Bacillota</taxon>
        <taxon>Bacilli</taxon>
        <taxon>Lactobacillales</taxon>
        <taxon>Streptococcaceae</taxon>
        <taxon>Streptococcus</taxon>
    </lineage>
</organism>
<proteinExistence type="inferred from homology"/>